<evidence type="ECO:0000250" key="1"/>
<evidence type="ECO:0000256" key="2">
    <source>
        <dbReference type="SAM" id="MobiDB-lite"/>
    </source>
</evidence>
<evidence type="ECO:0000305" key="3"/>
<gene>
    <name type="primary">pold1</name>
    <name type="ORF">DDB_G0285381</name>
</gene>
<name>DPOD1_DICDI</name>
<accession>Q54N97</accession>
<dbReference type="EC" id="2.7.7.7"/>
<dbReference type="EMBL" id="AAFI02000079">
    <property type="protein sequence ID" value="EAL64765.1"/>
    <property type="molecule type" value="Genomic_DNA"/>
</dbReference>
<dbReference type="RefSeq" id="XP_638283.1">
    <property type="nucleotide sequence ID" value="XM_633191.1"/>
</dbReference>
<dbReference type="SMR" id="Q54N97"/>
<dbReference type="FunCoup" id="Q54N97">
    <property type="interactions" value="603"/>
</dbReference>
<dbReference type="STRING" id="44689.Q54N97"/>
<dbReference type="GlyGen" id="Q54N97">
    <property type="glycosylation" value="1 site"/>
</dbReference>
<dbReference type="PaxDb" id="44689-DDB0232268"/>
<dbReference type="EnsemblProtists" id="EAL64765">
    <property type="protein sequence ID" value="EAL64765"/>
    <property type="gene ID" value="DDB_G0285381"/>
</dbReference>
<dbReference type="GeneID" id="8625091"/>
<dbReference type="KEGG" id="ddi:DDB_G0285381"/>
<dbReference type="dictyBase" id="DDB_G0285381">
    <property type="gene designation" value="polD1"/>
</dbReference>
<dbReference type="VEuPathDB" id="AmoebaDB:DDB_G0285381"/>
<dbReference type="eggNOG" id="KOG0969">
    <property type="taxonomic scope" value="Eukaryota"/>
</dbReference>
<dbReference type="HOGENOM" id="CLU_000203_2_0_1"/>
<dbReference type="InParanoid" id="Q54N97"/>
<dbReference type="OMA" id="CNNCRPR"/>
<dbReference type="PhylomeDB" id="Q54N97"/>
<dbReference type="Reactome" id="R-DDI-110314">
    <property type="pathway name" value="Recognition of DNA damage by PCNA-containing replication complex"/>
</dbReference>
<dbReference type="Reactome" id="R-DDI-5651801">
    <property type="pathway name" value="PCNA-Dependent Long Patch Base Excision Repair"/>
</dbReference>
<dbReference type="Reactome" id="R-DDI-5656169">
    <property type="pathway name" value="Termination of translesion DNA synthesis"/>
</dbReference>
<dbReference type="Reactome" id="R-DDI-5696397">
    <property type="pathway name" value="Gap-filling DNA repair synthesis and ligation in GG-NER"/>
</dbReference>
<dbReference type="Reactome" id="R-DDI-6782135">
    <property type="pathway name" value="Dual incision in TC-NER"/>
</dbReference>
<dbReference type="Reactome" id="R-DDI-6782210">
    <property type="pathway name" value="Gap-filling DNA repair synthesis and ligation in TC-NER"/>
</dbReference>
<dbReference type="Reactome" id="R-DDI-69091">
    <property type="pathway name" value="Polymerase switching"/>
</dbReference>
<dbReference type="Reactome" id="R-DDI-69166">
    <property type="pathway name" value="Removal of the Flap Intermediate"/>
</dbReference>
<dbReference type="Reactome" id="R-DDI-69183">
    <property type="pathway name" value="Processive synthesis on the lagging strand"/>
</dbReference>
<dbReference type="PRO" id="PR:Q54N97"/>
<dbReference type="Proteomes" id="UP000002195">
    <property type="component" value="Chromosome 4"/>
</dbReference>
<dbReference type="GO" id="GO:0043625">
    <property type="term" value="C:delta DNA polymerase complex"/>
    <property type="evidence" value="ECO:0000318"/>
    <property type="project" value="GO_Central"/>
</dbReference>
<dbReference type="GO" id="GO:0008296">
    <property type="term" value="F:3'-5'-DNA exonuclease activity"/>
    <property type="evidence" value="ECO:0000318"/>
    <property type="project" value="GO_Central"/>
</dbReference>
<dbReference type="GO" id="GO:0051539">
    <property type="term" value="F:4 iron, 4 sulfur cluster binding"/>
    <property type="evidence" value="ECO:0007669"/>
    <property type="project" value="UniProtKB-KW"/>
</dbReference>
<dbReference type="GO" id="GO:0003677">
    <property type="term" value="F:DNA binding"/>
    <property type="evidence" value="ECO:0007669"/>
    <property type="project" value="UniProtKB-KW"/>
</dbReference>
<dbReference type="GO" id="GO:0003887">
    <property type="term" value="F:DNA-directed DNA polymerase activity"/>
    <property type="evidence" value="ECO:0000250"/>
    <property type="project" value="dictyBase"/>
</dbReference>
<dbReference type="GO" id="GO:0000166">
    <property type="term" value="F:nucleotide binding"/>
    <property type="evidence" value="ECO:0007669"/>
    <property type="project" value="InterPro"/>
</dbReference>
<dbReference type="GO" id="GO:0008270">
    <property type="term" value="F:zinc ion binding"/>
    <property type="evidence" value="ECO:0007669"/>
    <property type="project" value="UniProtKB-KW"/>
</dbReference>
<dbReference type="GO" id="GO:0006287">
    <property type="term" value="P:base-excision repair, gap-filling"/>
    <property type="evidence" value="ECO:0000318"/>
    <property type="project" value="GO_Central"/>
</dbReference>
<dbReference type="GO" id="GO:0006281">
    <property type="term" value="P:DNA repair"/>
    <property type="evidence" value="ECO:0000250"/>
    <property type="project" value="dictyBase"/>
</dbReference>
<dbReference type="GO" id="GO:0045004">
    <property type="term" value="P:DNA replication proofreading"/>
    <property type="evidence" value="ECO:0000318"/>
    <property type="project" value="GO_Central"/>
</dbReference>
<dbReference type="GO" id="GO:0006261">
    <property type="term" value="P:DNA-templated DNA replication"/>
    <property type="evidence" value="ECO:0000318"/>
    <property type="project" value="GO_Central"/>
</dbReference>
<dbReference type="GO" id="GO:0006297">
    <property type="term" value="P:nucleotide-excision repair, DNA gap filling"/>
    <property type="evidence" value="ECO:0000318"/>
    <property type="project" value="GO_Central"/>
</dbReference>
<dbReference type="CDD" id="cd05777">
    <property type="entry name" value="DNA_polB_delta_exo"/>
    <property type="match status" value="1"/>
</dbReference>
<dbReference type="CDD" id="cd05533">
    <property type="entry name" value="POLBc_delta"/>
    <property type="match status" value="1"/>
</dbReference>
<dbReference type="FunFam" id="1.10.287.690:FF:000001">
    <property type="entry name" value="DNA polymerase"/>
    <property type="match status" value="1"/>
</dbReference>
<dbReference type="FunFam" id="3.30.342.10:FF:000007">
    <property type="entry name" value="DNA polymerase"/>
    <property type="match status" value="1"/>
</dbReference>
<dbReference type="FunFam" id="3.30.420.10:FF:000004">
    <property type="entry name" value="DNA polymerase"/>
    <property type="match status" value="1"/>
</dbReference>
<dbReference type="Gene3D" id="1.10.132.60">
    <property type="entry name" value="DNA polymerase family B, C-terminal domain"/>
    <property type="match status" value="1"/>
</dbReference>
<dbReference type="Gene3D" id="3.30.342.10">
    <property type="entry name" value="DNA Polymerase, chain B, domain 1"/>
    <property type="match status" value="1"/>
</dbReference>
<dbReference type="Gene3D" id="1.10.287.690">
    <property type="entry name" value="Helix hairpin bin"/>
    <property type="match status" value="1"/>
</dbReference>
<dbReference type="Gene3D" id="3.90.1600.10">
    <property type="entry name" value="Palm domain of DNA polymerase"/>
    <property type="match status" value="1"/>
</dbReference>
<dbReference type="Gene3D" id="3.30.420.10">
    <property type="entry name" value="Ribonuclease H-like superfamily/Ribonuclease H"/>
    <property type="match status" value="1"/>
</dbReference>
<dbReference type="InterPro" id="IPR006172">
    <property type="entry name" value="DNA-dir_DNA_pol_B"/>
</dbReference>
<dbReference type="InterPro" id="IPR017964">
    <property type="entry name" value="DNA-dir_DNA_pol_B_CS"/>
</dbReference>
<dbReference type="InterPro" id="IPR006133">
    <property type="entry name" value="DNA-dir_DNA_pol_B_exonuc"/>
</dbReference>
<dbReference type="InterPro" id="IPR006134">
    <property type="entry name" value="DNA-dir_DNA_pol_B_multi_dom"/>
</dbReference>
<dbReference type="InterPro" id="IPR043502">
    <property type="entry name" value="DNA/RNA_pol_sf"/>
</dbReference>
<dbReference type="InterPro" id="IPR042087">
    <property type="entry name" value="DNA_pol_B_thumb"/>
</dbReference>
<dbReference type="InterPro" id="IPR023211">
    <property type="entry name" value="DNA_pol_palm_dom_sf"/>
</dbReference>
<dbReference type="InterPro" id="IPR050240">
    <property type="entry name" value="DNA_pol_type-B"/>
</dbReference>
<dbReference type="InterPro" id="IPR056435">
    <property type="entry name" value="DPOD/Z_N"/>
</dbReference>
<dbReference type="InterPro" id="IPR012337">
    <property type="entry name" value="RNaseH-like_sf"/>
</dbReference>
<dbReference type="InterPro" id="IPR036397">
    <property type="entry name" value="RNaseH_sf"/>
</dbReference>
<dbReference type="InterPro" id="IPR025687">
    <property type="entry name" value="Znf-C4pol"/>
</dbReference>
<dbReference type="NCBIfam" id="TIGR00592">
    <property type="entry name" value="pol2"/>
    <property type="match status" value="1"/>
</dbReference>
<dbReference type="PANTHER" id="PTHR10322">
    <property type="entry name" value="DNA POLYMERASE CATALYTIC SUBUNIT"/>
    <property type="match status" value="1"/>
</dbReference>
<dbReference type="PANTHER" id="PTHR10322:SF23">
    <property type="entry name" value="DNA POLYMERASE DELTA CATALYTIC SUBUNIT"/>
    <property type="match status" value="1"/>
</dbReference>
<dbReference type="Pfam" id="PF00136">
    <property type="entry name" value="DNA_pol_B"/>
    <property type="match status" value="1"/>
</dbReference>
<dbReference type="Pfam" id="PF03104">
    <property type="entry name" value="DNA_pol_B_exo1"/>
    <property type="match status" value="1"/>
</dbReference>
<dbReference type="Pfam" id="PF24055">
    <property type="entry name" value="POL3_N"/>
    <property type="match status" value="1"/>
</dbReference>
<dbReference type="Pfam" id="PF14260">
    <property type="entry name" value="zf-C4pol"/>
    <property type="match status" value="1"/>
</dbReference>
<dbReference type="PRINTS" id="PR00106">
    <property type="entry name" value="DNAPOLB"/>
</dbReference>
<dbReference type="SMART" id="SM00486">
    <property type="entry name" value="POLBc"/>
    <property type="match status" value="1"/>
</dbReference>
<dbReference type="SUPFAM" id="SSF56672">
    <property type="entry name" value="DNA/RNA polymerases"/>
    <property type="match status" value="1"/>
</dbReference>
<dbReference type="SUPFAM" id="SSF53098">
    <property type="entry name" value="Ribonuclease H-like"/>
    <property type="match status" value="1"/>
</dbReference>
<dbReference type="PROSITE" id="PS00116">
    <property type="entry name" value="DNA_POLYMERASE_B"/>
    <property type="match status" value="1"/>
</dbReference>
<feature type="chain" id="PRO_0000328348" description="DNA polymerase delta catalytic subunit">
    <location>
        <begin position="1"/>
        <end position="1104"/>
    </location>
</feature>
<feature type="zinc finger region" description="CysA-type">
    <location>
        <begin position="1012"/>
        <end position="1030"/>
    </location>
</feature>
<feature type="region of interest" description="Disordered" evidence="2">
    <location>
        <begin position="1"/>
        <end position="60"/>
    </location>
</feature>
<feature type="short sequence motif" description="CysB motif">
    <location>
        <begin position="1059"/>
        <end position="1077"/>
    </location>
</feature>
<feature type="compositionally biased region" description="Acidic residues" evidence="2">
    <location>
        <begin position="31"/>
        <end position="60"/>
    </location>
</feature>
<feature type="binding site" evidence="1">
    <location>
        <position position="1012"/>
    </location>
    <ligand>
        <name>Zn(2+)</name>
        <dbReference type="ChEBI" id="CHEBI:29105"/>
    </ligand>
</feature>
<feature type="binding site" evidence="1">
    <location>
        <position position="1015"/>
    </location>
    <ligand>
        <name>Zn(2+)</name>
        <dbReference type="ChEBI" id="CHEBI:29105"/>
    </ligand>
</feature>
<feature type="binding site" evidence="1">
    <location>
        <position position="1027"/>
    </location>
    <ligand>
        <name>Zn(2+)</name>
        <dbReference type="ChEBI" id="CHEBI:29105"/>
    </ligand>
</feature>
<feature type="binding site" evidence="1">
    <location>
        <position position="1030"/>
    </location>
    <ligand>
        <name>Zn(2+)</name>
        <dbReference type="ChEBI" id="CHEBI:29105"/>
    </ligand>
</feature>
<feature type="binding site" evidence="1">
    <location>
        <position position="1059"/>
    </location>
    <ligand>
        <name>[4Fe-4S] cluster</name>
        <dbReference type="ChEBI" id="CHEBI:49883"/>
    </ligand>
</feature>
<feature type="binding site" evidence="1">
    <location>
        <position position="1062"/>
    </location>
    <ligand>
        <name>[4Fe-4S] cluster</name>
        <dbReference type="ChEBI" id="CHEBI:49883"/>
    </ligand>
</feature>
<feature type="binding site" evidence="1">
    <location>
        <position position="1072"/>
    </location>
    <ligand>
        <name>[4Fe-4S] cluster</name>
        <dbReference type="ChEBI" id="CHEBI:49883"/>
    </ligand>
</feature>
<feature type="binding site" evidence="1">
    <location>
        <position position="1077"/>
    </location>
    <ligand>
        <name>[4Fe-4S] cluster</name>
        <dbReference type="ChEBI" id="CHEBI:49883"/>
    </ligand>
</feature>
<proteinExistence type="inferred from homology"/>
<organism>
    <name type="scientific">Dictyostelium discoideum</name>
    <name type="common">Social amoeba</name>
    <dbReference type="NCBI Taxonomy" id="44689"/>
    <lineage>
        <taxon>Eukaryota</taxon>
        <taxon>Amoebozoa</taxon>
        <taxon>Evosea</taxon>
        <taxon>Eumycetozoa</taxon>
        <taxon>Dictyostelia</taxon>
        <taxon>Dictyosteliales</taxon>
        <taxon>Dictyosteliaceae</taxon>
        <taxon>Dictyostelium</taxon>
    </lineage>
</organism>
<reference key="1">
    <citation type="journal article" date="2005" name="Nature">
        <title>The genome of the social amoeba Dictyostelium discoideum.</title>
        <authorList>
            <person name="Eichinger L."/>
            <person name="Pachebat J.A."/>
            <person name="Gloeckner G."/>
            <person name="Rajandream M.A."/>
            <person name="Sucgang R."/>
            <person name="Berriman M."/>
            <person name="Song J."/>
            <person name="Olsen R."/>
            <person name="Szafranski K."/>
            <person name="Xu Q."/>
            <person name="Tunggal B."/>
            <person name="Kummerfeld S."/>
            <person name="Madera M."/>
            <person name="Konfortov B.A."/>
            <person name="Rivero F."/>
            <person name="Bankier A.T."/>
            <person name="Lehmann R."/>
            <person name="Hamlin N."/>
            <person name="Davies R."/>
            <person name="Gaudet P."/>
            <person name="Fey P."/>
            <person name="Pilcher K."/>
            <person name="Chen G."/>
            <person name="Saunders D."/>
            <person name="Sodergren E.J."/>
            <person name="Davis P."/>
            <person name="Kerhornou A."/>
            <person name="Nie X."/>
            <person name="Hall N."/>
            <person name="Anjard C."/>
            <person name="Hemphill L."/>
            <person name="Bason N."/>
            <person name="Farbrother P."/>
            <person name="Desany B."/>
            <person name="Just E."/>
            <person name="Morio T."/>
            <person name="Rost R."/>
            <person name="Churcher C.M."/>
            <person name="Cooper J."/>
            <person name="Haydock S."/>
            <person name="van Driessche N."/>
            <person name="Cronin A."/>
            <person name="Goodhead I."/>
            <person name="Muzny D.M."/>
            <person name="Mourier T."/>
            <person name="Pain A."/>
            <person name="Lu M."/>
            <person name="Harper D."/>
            <person name="Lindsay R."/>
            <person name="Hauser H."/>
            <person name="James K.D."/>
            <person name="Quiles M."/>
            <person name="Madan Babu M."/>
            <person name="Saito T."/>
            <person name="Buchrieser C."/>
            <person name="Wardroper A."/>
            <person name="Felder M."/>
            <person name="Thangavelu M."/>
            <person name="Johnson D."/>
            <person name="Knights A."/>
            <person name="Loulseged H."/>
            <person name="Mungall K.L."/>
            <person name="Oliver K."/>
            <person name="Price C."/>
            <person name="Quail M.A."/>
            <person name="Urushihara H."/>
            <person name="Hernandez J."/>
            <person name="Rabbinowitsch E."/>
            <person name="Steffen D."/>
            <person name="Sanders M."/>
            <person name="Ma J."/>
            <person name="Kohara Y."/>
            <person name="Sharp S."/>
            <person name="Simmonds M.N."/>
            <person name="Spiegler S."/>
            <person name="Tivey A."/>
            <person name="Sugano S."/>
            <person name="White B."/>
            <person name="Walker D."/>
            <person name="Woodward J.R."/>
            <person name="Winckler T."/>
            <person name="Tanaka Y."/>
            <person name="Shaulsky G."/>
            <person name="Schleicher M."/>
            <person name="Weinstock G.M."/>
            <person name="Rosenthal A."/>
            <person name="Cox E.C."/>
            <person name="Chisholm R.L."/>
            <person name="Gibbs R.A."/>
            <person name="Loomis W.F."/>
            <person name="Platzer M."/>
            <person name="Kay R.R."/>
            <person name="Williams J.G."/>
            <person name="Dear P.H."/>
            <person name="Noegel A.A."/>
            <person name="Barrell B.G."/>
            <person name="Kuspa A."/>
        </authorList>
    </citation>
    <scope>NUCLEOTIDE SEQUENCE [LARGE SCALE GENOMIC DNA]</scope>
    <source>
        <strain>AX4</strain>
    </source>
</reference>
<keyword id="KW-0004">4Fe-4S</keyword>
<keyword id="KW-0235">DNA replication</keyword>
<keyword id="KW-0238">DNA-binding</keyword>
<keyword id="KW-0239">DNA-directed DNA polymerase</keyword>
<keyword id="KW-0269">Exonuclease</keyword>
<keyword id="KW-0378">Hydrolase</keyword>
<keyword id="KW-0408">Iron</keyword>
<keyword id="KW-0411">Iron-sulfur</keyword>
<keyword id="KW-0479">Metal-binding</keyword>
<keyword id="KW-0540">Nuclease</keyword>
<keyword id="KW-0548">Nucleotidyltransferase</keyword>
<keyword id="KW-0539">Nucleus</keyword>
<keyword id="KW-1185">Reference proteome</keyword>
<keyword id="KW-0808">Transferase</keyword>
<keyword id="KW-0862">Zinc</keyword>
<keyword id="KW-0863">Zinc-finger</keyword>
<comment type="function">
    <text evidence="1">Possesses two enzymatic activities: DNA synthesis (polymerase) and an exonucleolytic activity that degrades single stranded DNA in the 3'- to 5'-direction.</text>
</comment>
<comment type="catalytic activity">
    <reaction>
        <text>DNA(n) + a 2'-deoxyribonucleoside 5'-triphosphate = DNA(n+1) + diphosphate</text>
        <dbReference type="Rhea" id="RHEA:22508"/>
        <dbReference type="Rhea" id="RHEA-COMP:17339"/>
        <dbReference type="Rhea" id="RHEA-COMP:17340"/>
        <dbReference type="ChEBI" id="CHEBI:33019"/>
        <dbReference type="ChEBI" id="CHEBI:61560"/>
        <dbReference type="ChEBI" id="CHEBI:173112"/>
        <dbReference type="EC" id="2.7.7.7"/>
    </reaction>
</comment>
<comment type="cofactor">
    <cofactor evidence="1">
        <name>[4Fe-4S] cluster</name>
        <dbReference type="ChEBI" id="CHEBI:49883"/>
    </cofactor>
    <text evidence="1">Binds 1 [4Fe-4S] cluster.</text>
</comment>
<comment type="subunit">
    <text evidence="1">Heterotetramer composed of subunits of 125 kDa, 50 kDa, 66 kDa and 12 kDa. The 125 kDa subunit contains the polymerase active site and most likely the active site for the 3'-5' exonuclease activity (By similarity).</text>
</comment>
<comment type="subcellular location">
    <subcellularLocation>
        <location>Nucleus</location>
    </subcellularLocation>
</comment>
<comment type="domain">
    <text evidence="1">The CysB motif binds 1 4Fe-4S cluster and is required for the formation of polymerase complexes.</text>
</comment>
<comment type="similarity">
    <text evidence="3">Belongs to the DNA polymerase type-B family.</text>
</comment>
<protein>
    <recommendedName>
        <fullName>DNA polymerase delta catalytic subunit</fullName>
        <ecNumber>2.7.7.7</ecNumber>
    </recommendedName>
    <alternativeName>
        <fullName>DNA polymerase III</fullName>
    </alternativeName>
</protein>
<sequence length="1104" mass="125346">MKRSIVTGGGNNDKKFKAQPPPKNNYRGGGDDEEDDEFEEDDDEDEGDEFGEEEDEDDIDVENIIASDSMDIDIQDDGSQQLFLWSRKPVQDLVPHKKPLIFQQLEVDYTEIKEPVPGMPGPKVGPLPAIRLFGVTKEGNSVLCKVHGFLPYFFISCPPGFTEADCKSLKHDLNESMKMSSNQSNEKDIENIVVSIDIEKKKSIMGYNPNPLSDFIRITLILPKFVTRCREIFESGRHHFTIPGQPFRQYQTYESNILFALRFLIDKGITGCSWIELPANTYKLSETPVSTCQIEVDTSLETIISLSDDDSPAPYRILSFDIECAGRKGVFPEPEKDPVIQISNIVKNNGDAEPFIKNIFTLKGCSSIVGAHVIPHKREEDLLREWRKFVIKVDPDVIIGYNIVNFDIPYLISRARQLKIPEFALLGRIKTTISKIKSTRFSSSNLGTRESKEISMPGRTQFDLMQAIQRDHKLTSYSLNNVSAHFLKEQKEDVHFSIISDLQNGTDDDRRRLAVYCIKDAVLPMRLLDKLMILINYTEMARVTGVPLSYLLGRGEGIKVLSQLYRKAMVENFLIPTYKVTGKGEKFQGAIVIEPTPGFYDTPIATLDFTSLYPSIMMAHNLCYSTLLSAEEAKKLPPEIYTTTPFGDHFIKSDTKKGLLPRILEELLSARKKAKDELKNEKDPFKRAVLDGRQLALKISANSVYGFTGARVGKLPCLEISRSVTSFGREMLDKTKKIVEERYTIANGYKHDAVIIYGDTDSVMVKFGVKTVAEAMEMGRDAAKFVTTTFIRPINLDFEKVYYPYLLMAKKKYAGLYWTKPDIHDRMDVKGLEMVRRDTCLLVRNVVSTILKKILIEKDLKSAEEYTKSVISDLLQNRLDLSMLVITKALSKTQYKGKVIHNELARKMRARDPATAPNLGDRVPYVVIQGSKGAPIYEKAEDPLYALEHNILLDCQYYLDKQLKAPLIRIFKPIMSNPDLIFHGEHTRTIAQSTLSDNNKGFFGTLKKKKVCMNCPKELTDTESTTCINCQHKEASLYQTSLEKVTSLETKFSEAWTQCQRCSGSLHQPVLCSNRDCPIFYMRTKVQLDLIEAKKTLNRFNVEW</sequence>